<keyword id="KW-0233">DNA recombination</keyword>
<keyword id="KW-0238">DNA-binding</keyword>
<keyword id="KW-0804">Transcription</keyword>
<keyword id="KW-0805">Transcription regulation</keyword>
<keyword id="KW-0810">Translation regulation</keyword>
<dbReference type="EMBL" id="AE003849">
    <property type="protein sequence ID" value="AAF85236.1"/>
    <property type="status" value="ALT_INIT"/>
    <property type="molecule type" value="Genomic_DNA"/>
</dbReference>
<dbReference type="PIR" id="A82559">
    <property type="entry name" value="A82559"/>
</dbReference>
<dbReference type="RefSeq" id="WP_004085973.1">
    <property type="nucleotide sequence ID" value="NC_002488.3"/>
</dbReference>
<dbReference type="SMR" id="Q9PAQ8"/>
<dbReference type="STRING" id="160492.XF_2437"/>
<dbReference type="KEGG" id="xfa:XF_2437"/>
<dbReference type="eggNOG" id="COG0776">
    <property type="taxonomic scope" value="Bacteria"/>
</dbReference>
<dbReference type="HOGENOM" id="CLU_105066_2_3_6"/>
<dbReference type="Proteomes" id="UP000000812">
    <property type="component" value="Chromosome"/>
</dbReference>
<dbReference type="GO" id="GO:0005694">
    <property type="term" value="C:chromosome"/>
    <property type="evidence" value="ECO:0007669"/>
    <property type="project" value="InterPro"/>
</dbReference>
<dbReference type="GO" id="GO:0005829">
    <property type="term" value="C:cytosol"/>
    <property type="evidence" value="ECO:0007669"/>
    <property type="project" value="TreeGrafter"/>
</dbReference>
<dbReference type="GO" id="GO:0003677">
    <property type="term" value="F:DNA binding"/>
    <property type="evidence" value="ECO:0007669"/>
    <property type="project" value="UniProtKB-UniRule"/>
</dbReference>
<dbReference type="GO" id="GO:0030527">
    <property type="term" value="F:structural constituent of chromatin"/>
    <property type="evidence" value="ECO:0007669"/>
    <property type="project" value="InterPro"/>
</dbReference>
<dbReference type="GO" id="GO:0006310">
    <property type="term" value="P:DNA recombination"/>
    <property type="evidence" value="ECO:0007669"/>
    <property type="project" value="UniProtKB-UniRule"/>
</dbReference>
<dbReference type="GO" id="GO:0006355">
    <property type="term" value="P:regulation of DNA-templated transcription"/>
    <property type="evidence" value="ECO:0007669"/>
    <property type="project" value="UniProtKB-UniRule"/>
</dbReference>
<dbReference type="GO" id="GO:0006417">
    <property type="term" value="P:regulation of translation"/>
    <property type="evidence" value="ECO:0007669"/>
    <property type="project" value="UniProtKB-UniRule"/>
</dbReference>
<dbReference type="CDD" id="cd13836">
    <property type="entry name" value="IHF_B"/>
    <property type="match status" value="1"/>
</dbReference>
<dbReference type="FunFam" id="4.10.520.10:FF:000003">
    <property type="entry name" value="Integration host factor subunit beta"/>
    <property type="match status" value="1"/>
</dbReference>
<dbReference type="Gene3D" id="4.10.520.10">
    <property type="entry name" value="IHF-like DNA-binding proteins"/>
    <property type="match status" value="1"/>
</dbReference>
<dbReference type="HAMAP" id="MF_00381">
    <property type="entry name" value="IHF_beta"/>
    <property type="match status" value="1"/>
</dbReference>
<dbReference type="InterPro" id="IPR000119">
    <property type="entry name" value="Hist_DNA-bd"/>
</dbReference>
<dbReference type="InterPro" id="IPR020816">
    <property type="entry name" value="Histone-like_DNA-bd_CS"/>
</dbReference>
<dbReference type="InterPro" id="IPR010992">
    <property type="entry name" value="IHF-like_DNA-bd_dom_sf"/>
</dbReference>
<dbReference type="InterPro" id="IPR005685">
    <property type="entry name" value="IHF_beta"/>
</dbReference>
<dbReference type="NCBIfam" id="TIGR00988">
    <property type="entry name" value="hip"/>
    <property type="match status" value="1"/>
</dbReference>
<dbReference type="NCBIfam" id="NF001222">
    <property type="entry name" value="PRK00199.1"/>
    <property type="match status" value="1"/>
</dbReference>
<dbReference type="PANTHER" id="PTHR33175">
    <property type="entry name" value="DNA-BINDING PROTEIN HU"/>
    <property type="match status" value="1"/>
</dbReference>
<dbReference type="PANTHER" id="PTHR33175:SF5">
    <property type="entry name" value="INTEGRATION HOST FACTOR SUBUNIT BETA"/>
    <property type="match status" value="1"/>
</dbReference>
<dbReference type="Pfam" id="PF00216">
    <property type="entry name" value="Bac_DNA_binding"/>
    <property type="match status" value="1"/>
</dbReference>
<dbReference type="PRINTS" id="PR01727">
    <property type="entry name" value="DNABINDINGHU"/>
</dbReference>
<dbReference type="SMART" id="SM00411">
    <property type="entry name" value="BHL"/>
    <property type="match status" value="1"/>
</dbReference>
<dbReference type="SUPFAM" id="SSF47729">
    <property type="entry name" value="IHF-like DNA-binding proteins"/>
    <property type="match status" value="1"/>
</dbReference>
<dbReference type="PROSITE" id="PS00045">
    <property type="entry name" value="HISTONE_LIKE"/>
    <property type="match status" value="1"/>
</dbReference>
<comment type="function">
    <text evidence="1">This protein is one of the two subunits of integration host factor, a specific DNA-binding protein that functions in genetic recombination as well as in transcriptional and translational control.</text>
</comment>
<comment type="subunit">
    <text evidence="1">Heterodimer of an alpha and a beta chain.</text>
</comment>
<comment type="similarity">
    <text evidence="2">Belongs to the bacterial histone-like protein family.</text>
</comment>
<comment type="sequence caution" evidence="2">
    <conflict type="erroneous initiation">
        <sequence resource="EMBL-CDS" id="AAF85236"/>
    </conflict>
</comment>
<protein>
    <recommendedName>
        <fullName>Integration host factor subunit beta</fullName>
        <shortName>IHF-beta</shortName>
    </recommendedName>
</protein>
<evidence type="ECO:0000250" key="1"/>
<evidence type="ECO:0000305" key="2"/>
<gene>
    <name type="primary">ihfB</name>
    <name type="synonym">himD</name>
    <name type="ordered locus">XF_2437</name>
</gene>
<proteinExistence type="inferred from homology"/>
<name>IHFB_XYLFA</name>
<accession>Q9PAQ8</accession>
<organism>
    <name type="scientific">Xylella fastidiosa (strain 9a5c)</name>
    <dbReference type="NCBI Taxonomy" id="160492"/>
    <lineage>
        <taxon>Bacteria</taxon>
        <taxon>Pseudomonadati</taxon>
        <taxon>Pseudomonadota</taxon>
        <taxon>Gammaproteobacteria</taxon>
        <taxon>Lysobacterales</taxon>
        <taxon>Lysobacteraceae</taxon>
        <taxon>Xylella</taxon>
    </lineage>
</organism>
<reference key="1">
    <citation type="journal article" date="2000" name="Nature">
        <title>The genome sequence of the plant pathogen Xylella fastidiosa.</title>
        <authorList>
            <person name="Simpson A.J.G."/>
            <person name="Reinach F.C."/>
            <person name="Arruda P."/>
            <person name="Abreu F.A."/>
            <person name="Acencio M."/>
            <person name="Alvarenga R."/>
            <person name="Alves L.M.C."/>
            <person name="Araya J.E."/>
            <person name="Baia G.S."/>
            <person name="Baptista C.S."/>
            <person name="Barros M.H."/>
            <person name="Bonaccorsi E.D."/>
            <person name="Bordin S."/>
            <person name="Bove J.M."/>
            <person name="Briones M.R.S."/>
            <person name="Bueno M.R.P."/>
            <person name="Camargo A.A."/>
            <person name="Camargo L.E.A."/>
            <person name="Carraro D.M."/>
            <person name="Carrer H."/>
            <person name="Colauto N.B."/>
            <person name="Colombo C."/>
            <person name="Costa F.F."/>
            <person name="Costa M.C.R."/>
            <person name="Costa-Neto C.M."/>
            <person name="Coutinho L.L."/>
            <person name="Cristofani M."/>
            <person name="Dias-Neto E."/>
            <person name="Docena C."/>
            <person name="El-Dorry H."/>
            <person name="Facincani A.P."/>
            <person name="Ferreira A.J.S."/>
            <person name="Ferreira V.C.A."/>
            <person name="Ferro J.A."/>
            <person name="Fraga J.S."/>
            <person name="Franca S.C."/>
            <person name="Franco M.C."/>
            <person name="Frohme M."/>
            <person name="Furlan L.R."/>
            <person name="Garnier M."/>
            <person name="Goldman G.H."/>
            <person name="Goldman M.H.S."/>
            <person name="Gomes S.L."/>
            <person name="Gruber A."/>
            <person name="Ho P.L."/>
            <person name="Hoheisel J.D."/>
            <person name="Junqueira M.L."/>
            <person name="Kemper E.L."/>
            <person name="Kitajima J.P."/>
            <person name="Krieger J.E."/>
            <person name="Kuramae E.E."/>
            <person name="Laigret F."/>
            <person name="Lambais M.R."/>
            <person name="Leite L.C.C."/>
            <person name="Lemos E.G.M."/>
            <person name="Lemos M.V.F."/>
            <person name="Lopes S.A."/>
            <person name="Lopes C.R."/>
            <person name="Machado J.A."/>
            <person name="Machado M.A."/>
            <person name="Madeira A.M.B.N."/>
            <person name="Madeira H.M.F."/>
            <person name="Marino C.L."/>
            <person name="Marques M.V."/>
            <person name="Martins E.A.L."/>
            <person name="Martins E.M.F."/>
            <person name="Matsukuma A.Y."/>
            <person name="Menck C.F.M."/>
            <person name="Miracca E.C."/>
            <person name="Miyaki C.Y."/>
            <person name="Monteiro-Vitorello C.B."/>
            <person name="Moon D.H."/>
            <person name="Nagai M.A."/>
            <person name="Nascimento A.L.T.O."/>
            <person name="Netto L.E.S."/>
            <person name="Nhani A. Jr."/>
            <person name="Nobrega F.G."/>
            <person name="Nunes L.R."/>
            <person name="Oliveira M.A."/>
            <person name="de Oliveira M.C."/>
            <person name="de Oliveira R.C."/>
            <person name="Palmieri D.A."/>
            <person name="Paris A."/>
            <person name="Peixoto B.R."/>
            <person name="Pereira G.A.G."/>
            <person name="Pereira H.A. Jr."/>
            <person name="Pesquero J.B."/>
            <person name="Quaggio R.B."/>
            <person name="Roberto P.G."/>
            <person name="Rodrigues V."/>
            <person name="de Rosa A.J.M."/>
            <person name="de Rosa V.E. Jr."/>
            <person name="de Sa R.G."/>
            <person name="Santelli R.V."/>
            <person name="Sawasaki H.E."/>
            <person name="da Silva A.C.R."/>
            <person name="da Silva A.M."/>
            <person name="da Silva F.R."/>
            <person name="Silva W.A. Jr."/>
            <person name="da Silveira J.F."/>
            <person name="Silvestri M.L.Z."/>
            <person name="Siqueira W.J."/>
            <person name="de Souza A.A."/>
            <person name="de Souza A.P."/>
            <person name="Terenzi M.F."/>
            <person name="Truffi D."/>
            <person name="Tsai S.M."/>
            <person name="Tsuhako M.H."/>
            <person name="Vallada H."/>
            <person name="Van Sluys M.A."/>
            <person name="Verjovski-Almeida S."/>
            <person name="Vettore A.L."/>
            <person name="Zago M.A."/>
            <person name="Zatz M."/>
            <person name="Meidanis J."/>
            <person name="Setubal J.C."/>
        </authorList>
    </citation>
    <scope>NUCLEOTIDE SEQUENCE [LARGE SCALE GENOMIC DNA]</scope>
    <source>
        <strain>9a5c</strain>
    </source>
</reference>
<sequence>MTKSELIEILTKRQAHLKSDDVDLAVKSLLEMMGGALSEGDRIEIRGFGSFSLHYRPPRCGRNPKTGESVALPGKYVPHFKPGKELRERVASVVPLAECGDITE</sequence>
<feature type="chain" id="PRO_0000105079" description="Integration host factor subunit beta">
    <location>
        <begin position="1"/>
        <end position="104"/>
    </location>
</feature>